<evidence type="ECO:0000250" key="1"/>
<evidence type="ECO:0000255" key="2"/>
<evidence type="ECO:0000303" key="3">
    <source>
    </source>
</evidence>
<evidence type="ECO:0000303" key="4">
    <source>
    </source>
</evidence>
<evidence type="ECO:0000305" key="5"/>
<protein>
    <recommendedName>
        <fullName>Apolipoprotein L4</fullName>
    </recommendedName>
    <alternativeName>
        <fullName>Apolipoprotein L-IV</fullName>
        <shortName>ApoL-IV</shortName>
    </alternativeName>
</protein>
<dbReference type="EMBL" id="AY014915">
    <property type="protein sequence ID" value="AAG50353.1"/>
    <property type="molecule type" value="mRNA"/>
</dbReference>
<dbReference type="EMBL" id="AY014913">
    <property type="protein sequence ID" value="AAG50350.1"/>
    <property type="molecule type" value="Genomic_DNA"/>
</dbReference>
<dbReference type="EMBL" id="AY014909">
    <property type="protein sequence ID" value="AAG50350.1"/>
    <property type="status" value="JOINED"/>
    <property type="molecule type" value="Genomic_DNA"/>
</dbReference>
<dbReference type="EMBL" id="AY014911">
    <property type="protein sequence ID" value="AAG50350.1"/>
    <property type="status" value="JOINED"/>
    <property type="molecule type" value="Genomic_DNA"/>
</dbReference>
<dbReference type="EMBL" id="AY014912">
    <property type="protein sequence ID" value="AAG50350.1"/>
    <property type="status" value="JOINED"/>
    <property type="molecule type" value="Genomic_DNA"/>
</dbReference>
<dbReference type="EMBL" id="AY014914">
    <property type="protein sequence ID" value="AAG50352.1"/>
    <property type="molecule type" value="mRNA"/>
</dbReference>
<dbReference type="EMBL" id="AY014913">
    <property type="protein sequence ID" value="AAG50351.1"/>
    <property type="molecule type" value="Genomic_DNA"/>
</dbReference>
<dbReference type="EMBL" id="AY014910">
    <property type="protein sequence ID" value="AAG50351.1"/>
    <property type="status" value="JOINED"/>
    <property type="molecule type" value="Genomic_DNA"/>
</dbReference>
<dbReference type="EMBL" id="AY014911">
    <property type="protein sequence ID" value="AAG50351.1"/>
    <property type="status" value="JOINED"/>
    <property type="molecule type" value="Genomic_DNA"/>
</dbReference>
<dbReference type="EMBL" id="AY014912">
    <property type="protein sequence ID" value="AAG50351.1"/>
    <property type="status" value="JOINED"/>
    <property type="molecule type" value="Genomic_DNA"/>
</dbReference>
<dbReference type="EMBL" id="AF305226">
    <property type="protein sequence ID" value="AAK20212.1"/>
    <property type="molecule type" value="mRNA"/>
</dbReference>
<dbReference type="CCDS" id="CCDS74851.1">
    <molecule id="Q9BPW4-2"/>
</dbReference>
<dbReference type="CCDS" id="CCDS74852.1">
    <molecule id="Q9BPW4-1"/>
</dbReference>
<dbReference type="RefSeq" id="NP_001373814.1">
    <molecule id="Q9BPW4-2"/>
    <property type="nucleotide sequence ID" value="NM_001386885.1"/>
</dbReference>
<dbReference type="RefSeq" id="NP_085146.2">
    <molecule id="Q9BPW4-2"/>
    <property type="nucleotide sequence ID" value="NM_030643.4"/>
</dbReference>
<dbReference type="RefSeq" id="NP_663693.1">
    <molecule id="Q9BPW4-1"/>
    <property type="nucleotide sequence ID" value="NM_145660.2"/>
</dbReference>
<dbReference type="RefSeq" id="XP_047297460.1">
    <molecule id="Q9BPW4-1"/>
    <property type="nucleotide sequence ID" value="XM_047441504.1"/>
</dbReference>
<dbReference type="RefSeq" id="XP_047297461.1">
    <molecule id="Q9BPW4-2"/>
    <property type="nucleotide sequence ID" value="XM_047441505.1"/>
</dbReference>
<dbReference type="SMR" id="Q9BPW4"/>
<dbReference type="BioGRID" id="123325">
    <property type="interactions" value="2"/>
</dbReference>
<dbReference type="FunCoup" id="Q9BPW4">
    <property type="interactions" value="9"/>
</dbReference>
<dbReference type="IntAct" id="Q9BPW4">
    <property type="interactions" value="1"/>
</dbReference>
<dbReference type="STRING" id="9606.ENSP00000338260"/>
<dbReference type="iPTMnet" id="Q9BPW4"/>
<dbReference type="PhosphoSitePlus" id="Q9BPW4"/>
<dbReference type="BioMuta" id="APOL4"/>
<dbReference type="DMDM" id="143811364"/>
<dbReference type="jPOST" id="Q9BPW4"/>
<dbReference type="MassIVE" id="Q9BPW4"/>
<dbReference type="PaxDb" id="9606-ENSP00000338260"/>
<dbReference type="PeptideAtlas" id="Q9BPW4"/>
<dbReference type="ProteomicsDB" id="78577">
    <molecule id="Q9BPW4-1"/>
</dbReference>
<dbReference type="ProteomicsDB" id="78578">
    <molecule id="Q9BPW4-2"/>
</dbReference>
<dbReference type="ProteomicsDB" id="78579">
    <molecule id="Q9BPW4-3"/>
</dbReference>
<dbReference type="Antibodypedia" id="25529">
    <property type="antibodies" value="206 antibodies from 33 providers"/>
</dbReference>
<dbReference type="DNASU" id="80832"/>
<dbReference type="Ensembl" id="ENST00000332987.5">
    <molecule id="Q9BPW4-2"/>
    <property type="protein sequence ID" value="ENSP00000333229.2"/>
    <property type="gene ID" value="ENSG00000100336.18"/>
</dbReference>
<dbReference type="Ensembl" id="ENST00000352371.5">
    <molecule id="Q9BPW4-1"/>
    <property type="protein sequence ID" value="ENSP00000338260.3"/>
    <property type="gene ID" value="ENSG00000100336.18"/>
</dbReference>
<dbReference type="Ensembl" id="ENST00000457630.7">
    <molecule id="Q9BPW4-2"/>
    <property type="protein sequence ID" value="ENSP00000409085.3"/>
    <property type="gene ID" value="ENSG00000100336.18"/>
</dbReference>
<dbReference type="Ensembl" id="ENST00000616056.4">
    <molecule id="Q9BPW4-2"/>
    <property type="protein sequence ID" value="ENSP00000483497.1"/>
    <property type="gene ID" value="ENSG00000100336.18"/>
</dbReference>
<dbReference type="Ensembl" id="ENST00000683024.1">
    <molecule id="Q9BPW4-2"/>
    <property type="protein sequence ID" value="ENSP00000507418.1"/>
    <property type="gene ID" value="ENSG00000100336.18"/>
</dbReference>
<dbReference type="Ensembl" id="ENST00000684666.1">
    <molecule id="Q9BPW4-2"/>
    <property type="protein sequence ID" value="ENSP00000506782.1"/>
    <property type="gene ID" value="ENSG00000100336.18"/>
</dbReference>
<dbReference type="GeneID" id="80832"/>
<dbReference type="KEGG" id="hsa:80832"/>
<dbReference type="MANE-Select" id="ENST00000683024.1">
    <molecule id="Q9BPW4-2"/>
    <property type="protein sequence ID" value="ENSP00000507418.1"/>
    <property type="RefSeq nucleotide sequence ID" value="NM_001386885.1"/>
    <property type="RefSeq protein sequence ID" value="NP_001373814.1"/>
</dbReference>
<dbReference type="UCSC" id="uc032qne.2">
    <molecule id="Q9BPW4-1"/>
    <property type="organism name" value="human"/>
</dbReference>
<dbReference type="AGR" id="HGNC:14867"/>
<dbReference type="CTD" id="80832"/>
<dbReference type="DisGeNET" id="80832"/>
<dbReference type="GeneCards" id="APOL4"/>
<dbReference type="HGNC" id="HGNC:14867">
    <property type="gene designation" value="APOL4"/>
</dbReference>
<dbReference type="HPA" id="ENSG00000100336">
    <property type="expression patterns" value="Low tissue specificity"/>
</dbReference>
<dbReference type="MalaCards" id="APOL4"/>
<dbReference type="MIM" id="607254">
    <property type="type" value="gene"/>
</dbReference>
<dbReference type="neXtProt" id="NX_Q9BPW4"/>
<dbReference type="OpenTargets" id="ENSG00000100336"/>
<dbReference type="PharmGKB" id="PA24907"/>
<dbReference type="VEuPathDB" id="HostDB:ENSG00000100336"/>
<dbReference type="eggNOG" id="ENOG502RZGU">
    <property type="taxonomic scope" value="Eukaryota"/>
</dbReference>
<dbReference type="GeneTree" id="ENSGT01030000234599"/>
<dbReference type="HOGENOM" id="CLU_046288_1_0_1"/>
<dbReference type="InParanoid" id="Q9BPW4"/>
<dbReference type="OMA" id="INIHAME"/>
<dbReference type="OrthoDB" id="6363454at2759"/>
<dbReference type="PAN-GO" id="Q9BPW4">
    <property type="GO annotations" value="1 GO annotation based on evolutionary models"/>
</dbReference>
<dbReference type="PhylomeDB" id="Q9BPW4"/>
<dbReference type="PathwayCommons" id="Q9BPW4"/>
<dbReference type="SignaLink" id="Q9BPW4"/>
<dbReference type="BioGRID-ORCS" id="80832">
    <property type="hits" value="14 hits in 356 CRISPR screens"/>
</dbReference>
<dbReference type="CD-CODE" id="FB4E32DD">
    <property type="entry name" value="Presynaptic clusters and postsynaptic densities"/>
</dbReference>
<dbReference type="ChiTaRS" id="APOL4">
    <property type="organism name" value="human"/>
</dbReference>
<dbReference type="GenomeRNAi" id="80832"/>
<dbReference type="Pharos" id="Q9BPW4">
    <property type="development level" value="Tdark"/>
</dbReference>
<dbReference type="PRO" id="PR:Q9BPW4"/>
<dbReference type="Proteomes" id="UP000005640">
    <property type="component" value="Chromosome 22"/>
</dbReference>
<dbReference type="RNAct" id="Q9BPW4">
    <property type="molecule type" value="protein"/>
</dbReference>
<dbReference type="Bgee" id="ENSG00000100336">
    <property type="expression patterns" value="Expressed in adenohypophysis and 141 other cell types or tissues"/>
</dbReference>
<dbReference type="ExpressionAtlas" id="Q9BPW4">
    <property type="expression patterns" value="baseline and differential"/>
</dbReference>
<dbReference type="GO" id="GO:0005615">
    <property type="term" value="C:extracellular space"/>
    <property type="evidence" value="ECO:0000250"/>
    <property type="project" value="BHF-UCL"/>
</dbReference>
<dbReference type="GO" id="GO:0043231">
    <property type="term" value="C:intracellular membrane-bounded organelle"/>
    <property type="evidence" value="ECO:0000314"/>
    <property type="project" value="HPA"/>
</dbReference>
<dbReference type="GO" id="GO:0008289">
    <property type="term" value="F:lipid binding"/>
    <property type="evidence" value="ECO:0000318"/>
    <property type="project" value="GO_Central"/>
</dbReference>
<dbReference type="GO" id="GO:0006629">
    <property type="term" value="P:lipid metabolic process"/>
    <property type="evidence" value="ECO:0000303"/>
    <property type="project" value="UniProtKB"/>
</dbReference>
<dbReference type="GO" id="GO:0006869">
    <property type="term" value="P:lipid transport"/>
    <property type="evidence" value="ECO:0007669"/>
    <property type="project" value="UniProtKB-KW"/>
</dbReference>
<dbReference type="GO" id="GO:0042157">
    <property type="term" value="P:lipoprotein metabolic process"/>
    <property type="evidence" value="ECO:0007669"/>
    <property type="project" value="InterPro"/>
</dbReference>
<dbReference type="InterPro" id="IPR008405">
    <property type="entry name" value="ApoL"/>
</dbReference>
<dbReference type="PANTHER" id="PTHR14096">
    <property type="entry name" value="APOLIPOPROTEIN L"/>
    <property type="match status" value="1"/>
</dbReference>
<dbReference type="PANTHER" id="PTHR14096:SF39">
    <property type="entry name" value="APOLIPOPROTEIN L4"/>
    <property type="match status" value="1"/>
</dbReference>
<dbReference type="Pfam" id="PF05461">
    <property type="entry name" value="ApoL"/>
    <property type="match status" value="1"/>
</dbReference>
<comment type="function">
    <text evidence="1">May play a role in lipid exchange and transport throughout the body. May participate in reverse cholesterol transport from peripheral cells to the liver (By similarity).</text>
</comment>
<comment type="subcellular location">
    <subcellularLocation>
        <location evidence="5">Secreted</location>
    </subcellularLocation>
</comment>
<comment type="alternative products">
    <event type="alternative splicing"/>
    <isoform>
        <id>Q9BPW4-1</id>
        <name>1</name>
        <name>B</name>
        <sequence type="displayed"/>
    </isoform>
    <isoform>
        <id>Q9BPW4-2</id>
        <name>2</name>
        <name>A</name>
        <sequence type="described" ref="VSP_000295"/>
    </isoform>
    <isoform>
        <id>Q9BPW4-3</id>
        <name>3</name>
        <sequence type="described" ref="VSP_000295 VSP_024380"/>
    </isoform>
</comment>
<comment type="tissue specificity">
    <text>Widely expressed; the highest levels are in spinal cord, placenta, adrenal gland; also detected in spleen, bone marrow, uterus, trachea, mammary gland and testis; levels are low in brain, heart and pancreas.</text>
</comment>
<comment type="similarity">
    <text evidence="5">Belongs to the apolipoprotein L family.</text>
</comment>
<accession>Q9BPW4</accession>
<accession>Q9BQ37</accession>
<accession>Q9BXQ8</accession>
<reference key="1">
    <citation type="journal article" date="2001" name="J. Lipid Res.">
        <title>Apolipoprotein L gene family: tissue-specific expression, splicing, promoter regions; discovery of a new gene.</title>
        <authorList>
            <person name="Duchateau P.N."/>
            <person name="Pullinger C.R."/>
            <person name="Cho M.H."/>
            <person name="Eng C."/>
            <person name="Kane J.P."/>
        </authorList>
    </citation>
    <scope>NUCLEOTIDE SEQUENCE [GENOMIC DNA / MRNA] (ISOFORMS 1 AND 2)</scope>
    <source>
        <tissue>Pancreas</tissue>
    </source>
</reference>
<reference key="2">
    <citation type="journal article" date="2001" name="Genomics">
        <title>The human apolipoprotein L gene cluster: identification, classification, and sites of distribution.</title>
        <authorList>
            <person name="Page N.M."/>
            <person name="Butlin D.J."/>
            <person name="Lomthaisong K."/>
            <person name="Lowry P.J."/>
        </authorList>
    </citation>
    <scope>NUCLEOTIDE SEQUENCE [MRNA] (ISOFORM 3)</scope>
    <source>
        <tissue>Placenta</tissue>
    </source>
</reference>
<proteinExistence type="evidence at protein level"/>
<keyword id="KW-0025">Alternative splicing</keyword>
<keyword id="KW-0445">Lipid transport</keyword>
<keyword id="KW-1267">Proteomics identification</keyword>
<keyword id="KW-1185">Reference proteome</keyword>
<keyword id="KW-0964">Secreted</keyword>
<keyword id="KW-0732">Signal</keyword>
<keyword id="KW-0813">Transport</keyword>
<sequence>MEGAALLKIFVVCIWVQQNHPGWTVAGQFQEKKRFTEEVIEYFQKKVSPVHLKILLTSDEAWKRFVRVAELPREEADALYEALKNLTPYVAIEDKDMQQKEQQFREWFLKEFPQIRWKIQESIERLRVIANEIEKVHRGCVIANVVSGSTGILSVIGVMLAPFTAGLSLSITAAGVGLGIASATAGIASSIVENTYTRSAELTASRLTATSTDQLEALRDILRDITPNVLSFALDFDEATKMIANDVHTLRRSKATVGRPLIAWRYVPINVVETLRTRGAPTRIVRKVARNLGKATSGVLVVLDVVNLVQDSLDLHKGAKSESAESLRQWAQELEENLNELTHIHQSLKAG</sequence>
<feature type="signal peptide" evidence="2">
    <location>
        <begin position="1"/>
        <end position="21"/>
    </location>
</feature>
<feature type="chain" id="PRO_0000002041" description="Apolipoprotein L4">
    <location>
        <begin position="22"/>
        <end position="351"/>
    </location>
</feature>
<feature type="splice variant" id="VSP_000295" description="In isoform 2 and isoform 3." evidence="3 4">
    <original>MEGAALLKIFVVCIW</original>
    <variation>MGSWVQLITSVG</variation>
    <location>
        <begin position="1"/>
        <end position="15"/>
    </location>
</feature>
<feature type="splice variant" id="VSP_024380" description="In isoform 3." evidence="4">
    <location>
        <position position="111"/>
    </location>
</feature>
<feature type="sequence variant" id="VAR_053008" description="In dbSNP:rs132736.">
    <original>I</original>
    <variation>V</variation>
    <location>
        <position position="9"/>
    </location>
</feature>
<feature type="sequence variant" id="VAR_053009" description="In dbSNP:rs80587.">
    <original>V</original>
    <variation>L</variation>
    <location>
        <position position="12"/>
    </location>
</feature>
<feature type="sequence variant" id="VAR_053010" description="In dbSNP:rs132700.">
    <original>M</original>
    <variation>V</variation>
    <location>
        <position position="159"/>
    </location>
</feature>
<feature type="sequence variant" id="VAR_059966" description="In dbSNP:rs2227168.">
    <original>R</original>
    <variation>H</variation>
    <location>
        <position position="223"/>
    </location>
</feature>
<feature type="sequence variant" id="VAR_059967" description="In dbSNP:rs6000173.">
    <original>A</original>
    <variation>E</variation>
    <location>
        <position position="319"/>
    </location>
</feature>
<feature type="sequence variant" id="VAR_059968" description="In dbSNP:rs6000172.">
    <original>S</original>
    <variation>L</variation>
    <location>
        <position position="326"/>
    </location>
</feature>
<name>APOL4_HUMAN</name>
<organism>
    <name type="scientific">Homo sapiens</name>
    <name type="common">Human</name>
    <dbReference type="NCBI Taxonomy" id="9606"/>
    <lineage>
        <taxon>Eukaryota</taxon>
        <taxon>Metazoa</taxon>
        <taxon>Chordata</taxon>
        <taxon>Craniata</taxon>
        <taxon>Vertebrata</taxon>
        <taxon>Euteleostomi</taxon>
        <taxon>Mammalia</taxon>
        <taxon>Eutheria</taxon>
        <taxon>Euarchontoglires</taxon>
        <taxon>Primates</taxon>
        <taxon>Haplorrhini</taxon>
        <taxon>Catarrhini</taxon>
        <taxon>Hominidae</taxon>
        <taxon>Homo</taxon>
    </lineage>
</organism>
<gene>
    <name type="primary">APOL4</name>
</gene>